<accession>B7HVU6</accession>
<name>PXPA_BACC7</name>
<proteinExistence type="inferred from homology"/>
<keyword id="KW-0067">ATP-binding</keyword>
<keyword id="KW-0378">Hydrolase</keyword>
<keyword id="KW-0547">Nucleotide-binding</keyword>
<organism>
    <name type="scientific">Bacillus cereus (strain AH187)</name>
    <dbReference type="NCBI Taxonomy" id="405534"/>
    <lineage>
        <taxon>Bacteria</taxon>
        <taxon>Bacillati</taxon>
        <taxon>Bacillota</taxon>
        <taxon>Bacilli</taxon>
        <taxon>Bacillales</taxon>
        <taxon>Bacillaceae</taxon>
        <taxon>Bacillus</taxon>
        <taxon>Bacillus cereus group</taxon>
    </lineage>
</organism>
<evidence type="ECO:0000255" key="1">
    <source>
        <dbReference type="HAMAP-Rule" id="MF_00691"/>
    </source>
</evidence>
<reference key="1">
    <citation type="submission" date="2008-10" db="EMBL/GenBank/DDBJ databases">
        <title>Genome sequence of Bacillus cereus AH187.</title>
        <authorList>
            <person name="Dodson R.J."/>
            <person name="Durkin A.S."/>
            <person name="Rosovitz M.J."/>
            <person name="Rasko D.A."/>
            <person name="Kolsto A.B."/>
            <person name="Okstad O.A."/>
            <person name="Ravel J."/>
            <person name="Sutton G."/>
        </authorList>
    </citation>
    <scope>NUCLEOTIDE SEQUENCE [LARGE SCALE GENOMIC DNA]</scope>
    <source>
        <strain>AH187</strain>
    </source>
</reference>
<feature type="chain" id="PRO_1000132040" description="5-oxoprolinase subunit A">
    <location>
        <begin position="1"/>
        <end position="253"/>
    </location>
</feature>
<protein>
    <recommendedName>
        <fullName evidence="1">5-oxoprolinase subunit A</fullName>
        <shortName evidence="1">5-OPase subunit A</shortName>
        <ecNumber evidence="1">3.5.2.9</ecNumber>
    </recommendedName>
    <alternativeName>
        <fullName evidence="1">5-oxoprolinase (ATP-hydrolyzing) subunit A</fullName>
    </alternativeName>
</protein>
<comment type="function">
    <text evidence="1">Catalyzes the cleavage of 5-oxoproline to form L-glutamate coupled to the hydrolysis of ATP to ADP and inorganic phosphate.</text>
</comment>
<comment type="catalytic activity">
    <reaction evidence="1">
        <text>5-oxo-L-proline + ATP + 2 H2O = L-glutamate + ADP + phosphate + H(+)</text>
        <dbReference type="Rhea" id="RHEA:10348"/>
        <dbReference type="ChEBI" id="CHEBI:15377"/>
        <dbReference type="ChEBI" id="CHEBI:15378"/>
        <dbReference type="ChEBI" id="CHEBI:29985"/>
        <dbReference type="ChEBI" id="CHEBI:30616"/>
        <dbReference type="ChEBI" id="CHEBI:43474"/>
        <dbReference type="ChEBI" id="CHEBI:58402"/>
        <dbReference type="ChEBI" id="CHEBI:456216"/>
        <dbReference type="EC" id="3.5.2.9"/>
    </reaction>
</comment>
<comment type="subunit">
    <text evidence="1">Forms a complex composed of PxpA, PxpB and PxpC.</text>
</comment>
<comment type="similarity">
    <text evidence="1">Belongs to the LamB/PxpA family.</text>
</comment>
<dbReference type="EC" id="3.5.2.9" evidence="1"/>
<dbReference type="EMBL" id="CP001177">
    <property type="protein sequence ID" value="ACJ79858.1"/>
    <property type="molecule type" value="Genomic_DNA"/>
</dbReference>
<dbReference type="SMR" id="B7HVU6"/>
<dbReference type="KEGG" id="bcr:BCAH187_A3118"/>
<dbReference type="HOGENOM" id="CLU_069535_0_0_9"/>
<dbReference type="Proteomes" id="UP000002214">
    <property type="component" value="Chromosome"/>
</dbReference>
<dbReference type="GO" id="GO:0017168">
    <property type="term" value="F:5-oxoprolinase (ATP-hydrolyzing) activity"/>
    <property type="evidence" value="ECO:0007669"/>
    <property type="project" value="UniProtKB-UniRule"/>
</dbReference>
<dbReference type="GO" id="GO:0005524">
    <property type="term" value="F:ATP binding"/>
    <property type="evidence" value="ECO:0007669"/>
    <property type="project" value="UniProtKB-UniRule"/>
</dbReference>
<dbReference type="GO" id="GO:0005975">
    <property type="term" value="P:carbohydrate metabolic process"/>
    <property type="evidence" value="ECO:0007669"/>
    <property type="project" value="InterPro"/>
</dbReference>
<dbReference type="CDD" id="cd10787">
    <property type="entry name" value="LamB_YcsF_like"/>
    <property type="match status" value="1"/>
</dbReference>
<dbReference type="Gene3D" id="3.20.20.370">
    <property type="entry name" value="Glycoside hydrolase/deacetylase"/>
    <property type="match status" value="1"/>
</dbReference>
<dbReference type="HAMAP" id="MF_00691">
    <property type="entry name" value="PxpA"/>
    <property type="match status" value="1"/>
</dbReference>
<dbReference type="InterPro" id="IPR011330">
    <property type="entry name" value="Glyco_hydro/deAcase_b/a-brl"/>
</dbReference>
<dbReference type="InterPro" id="IPR005501">
    <property type="entry name" value="LamB/YcsF/PxpA-like"/>
</dbReference>
<dbReference type="NCBIfam" id="NF003813">
    <property type="entry name" value="PRK05406.1-2"/>
    <property type="match status" value="1"/>
</dbReference>
<dbReference type="NCBIfam" id="NF003814">
    <property type="entry name" value="PRK05406.1-3"/>
    <property type="match status" value="1"/>
</dbReference>
<dbReference type="NCBIfam" id="NF003816">
    <property type="entry name" value="PRK05406.1-5"/>
    <property type="match status" value="1"/>
</dbReference>
<dbReference type="PANTHER" id="PTHR30292:SF0">
    <property type="entry name" value="5-OXOPROLINASE SUBUNIT A"/>
    <property type="match status" value="1"/>
</dbReference>
<dbReference type="PANTHER" id="PTHR30292">
    <property type="entry name" value="UNCHARACTERIZED PROTEIN YBGL-RELATED"/>
    <property type="match status" value="1"/>
</dbReference>
<dbReference type="Pfam" id="PF03746">
    <property type="entry name" value="LamB_YcsF"/>
    <property type="match status" value="1"/>
</dbReference>
<dbReference type="SUPFAM" id="SSF88713">
    <property type="entry name" value="Glycoside hydrolase/deacetylase"/>
    <property type="match status" value="1"/>
</dbReference>
<sequence>MTTIDLNCDLGESFGAYKMGNDDEILPFVSSINVACGFHAGDPSVMRQTVEKAMQHNVAIGAHPGFPDLIGFGRRNMNVPASEVYDYVLYQIGALDGFVKAAGGKMHHVKPHGALYNMAATNPEIADAIAKAIYHINPSLLLYGLANSEAFIQAAEKYNITLIQEAFADRTYKQDGTLTSRTEENALIKNEEEAIKQVLQMVKEGYVNSVNGEKVAVQAQTICLHGDGEKAVQFAKRIYRTFEHNGISICAPK</sequence>
<gene>
    <name evidence="1" type="primary">pxpA</name>
    <name type="ordered locus">BCAH187_A3118</name>
</gene>